<protein>
    <recommendedName>
        <fullName evidence="1">Methylthioribulose-1-phosphate dehydratase</fullName>
        <shortName evidence="1">MTRu-1-P dehydratase</shortName>
        <ecNumber evidence="1">4.2.1.109</ecNumber>
    </recommendedName>
</protein>
<keyword id="KW-0028">Amino-acid biosynthesis</keyword>
<keyword id="KW-0963">Cytoplasm</keyword>
<keyword id="KW-0456">Lyase</keyword>
<keyword id="KW-0479">Metal-binding</keyword>
<keyword id="KW-0486">Methionine biosynthesis</keyword>
<keyword id="KW-1185">Reference proteome</keyword>
<keyword id="KW-0862">Zinc</keyword>
<accession>A7EH92</accession>
<proteinExistence type="inferred from homology"/>
<evidence type="ECO:0000255" key="1">
    <source>
        <dbReference type="HAMAP-Rule" id="MF_03116"/>
    </source>
</evidence>
<feature type="chain" id="PRO_0000393851" description="Methylthioribulose-1-phosphate dehydratase">
    <location>
        <begin position="1"/>
        <end position="252"/>
    </location>
</feature>
<feature type="active site" description="Proton donor/acceptor" evidence="1">
    <location>
        <position position="151"/>
    </location>
</feature>
<feature type="binding site" evidence="1">
    <location>
        <position position="105"/>
    </location>
    <ligand>
        <name>substrate</name>
    </ligand>
</feature>
<feature type="binding site" evidence="1">
    <location>
        <position position="123"/>
    </location>
    <ligand>
        <name>Zn(2+)</name>
        <dbReference type="ChEBI" id="CHEBI:29105"/>
    </ligand>
</feature>
<feature type="binding site" evidence="1">
    <location>
        <position position="125"/>
    </location>
    <ligand>
        <name>Zn(2+)</name>
        <dbReference type="ChEBI" id="CHEBI:29105"/>
    </ligand>
</feature>
<feature type="binding site" evidence="1">
    <location>
        <position position="208"/>
    </location>
    <ligand>
        <name>Zn(2+)</name>
        <dbReference type="ChEBI" id="CHEBI:29105"/>
    </ligand>
</feature>
<dbReference type="EC" id="4.2.1.109" evidence="1"/>
<dbReference type="EMBL" id="CH476625">
    <property type="protein sequence ID" value="EDO02208.1"/>
    <property type="molecule type" value="Genomic_DNA"/>
</dbReference>
<dbReference type="RefSeq" id="XP_001594876.1">
    <property type="nucleotide sequence ID" value="XM_001594826.1"/>
</dbReference>
<dbReference type="SMR" id="A7EH92"/>
<dbReference type="FunCoup" id="A7EH92">
    <property type="interactions" value="240"/>
</dbReference>
<dbReference type="STRING" id="665079.A7EH92"/>
<dbReference type="EnsemblFungi" id="EDO02208">
    <property type="protein sequence ID" value="EDO02208"/>
    <property type="gene ID" value="SS1G_04684"/>
</dbReference>
<dbReference type="GeneID" id="5491118"/>
<dbReference type="KEGG" id="ssl:SS1G_04684"/>
<dbReference type="VEuPathDB" id="FungiDB:sscle_02g014930"/>
<dbReference type="eggNOG" id="KOG2631">
    <property type="taxonomic scope" value="Eukaryota"/>
</dbReference>
<dbReference type="HOGENOM" id="CLU_006033_4_0_1"/>
<dbReference type="InParanoid" id="A7EH92"/>
<dbReference type="OMA" id="WFPGTSG"/>
<dbReference type="OrthoDB" id="191080at2759"/>
<dbReference type="UniPathway" id="UPA00904">
    <property type="reaction ID" value="UER00875"/>
</dbReference>
<dbReference type="Proteomes" id="UP000001312">
    <property type="component" value="Unassembled WGS sequence"/>
</dbReference>
<dbReference type="GO" id="GO:0005737">
    <property type="term" value="C:cytoplasm"/>
    <property type="evidence" value="ECO:0000318"/>
    <property type="project" value="GO_Central"/>
</dbReference>
<dbReference type="GO" id="GO:0046570">
    <property type="term" value="F:methylthioribulose 1-phosphate dehydratase activity"/>
    <property type="evidence" value="ECO:0000318"/>
    <property type="project" value="GO_Central"/>
</dbReference>
<dbReference type="GO" id="GO:0008270">
    <property type="term" value="F:zinc ion binding"/>
    <property type="evidence" value="ECO:0007669"/>
    <property type="project" value="UniProtKB-UniRule"/>
</dbReference>
<dbReference type="GO" id="GO:0019509">
    <property type="term" value="P:L-methionine salvage from methylthioadenosine"/>
    <property type="evidence" value="ECO:0000318"/>
    <property type="project" value="GO_Central"/>
</dbReference>
<dbReference type="FunFam" id="3.40.225.10:FF:000003">
    <property type="entry name" value="Methylthioribulose-1-phosphate dehydratase"/>
    <property type="match status" value="1"/>
</dbReference>
<dbReference type="Gene3D" id="3.40.225.10">
    <property type="entry name" value="Class II aldolase/adducin N-terminal domain"/>
    <property type="match status" value="1"/>
</dbReference>
<dbReference type="HAMAP" id="MF_03116">
    <property type="entry name" value="Salvage_MtnB_euk"/>
    <property type="match status" value="1"/>
</dbReference>
<dbReference type="InterPro" id="IPR001303">
    <property type="entry name" value="Aldolase_II/adducin_N"/>
</dbReference>
<dbReference type="InterPro" id="IPR036409">
    <property type="entry name" value="Aldolase_II/adducin_N_sf"/>
</dbReference>
<dbReference type="InterPro" id="IPR017714">
    <property type="entry name" value="MethylthioRu-1-P_deHdtase_MtnB"/>
</dbReference>
<dbReference type="InterPro" id="IPR027514">
    <property type="entry name" value="Salvage_MtnB_euk"/>
</dbReference>
<dbReference type="NCBIfam" id="TIGR03328">
    <property type="entry name" value="salvage_mtnB"/>
    <property type="match status" value="1"/>
</dbReference>
<dbReference type="PANTHER" id="PTHR10640">
    <property type="entry name" value="METHYLTHIORIBULOSE-1-PHOSPHATE DEHYDRATASE"/>
    <property type="match status" value="1"/>
</dbReference>
<dbReference type="PANTHER" id="PTHR10640:SF7">
    <property type="entry name" value="METHYLTHIORIBULOSE-1-PHOSPHATE DEHYDRATASE"/>
    <property type="match status" value="1"/>
</dbReference>
<dbReference type="Pfam" id="PF00596">
    <property type="entry name" value="Aldolase_II"/>
    <property type="match status" value="1"/>
</dbReference>
<dbReference type="SMART" id="SM01007">
    <property type="entry name" value="Aldolase_II"/>
    <property type="match status" value="1"/>
</dbReference>
<dbReference type="SUPFAM" id="SSF53639">
    <property type="entry name" value="AraD/HMP-PK domain-like"/>
    <property type="match status" value="1"/>
</dbReference>
<organism>
    <name type="scientific">Sclerotinia sclerotiorum (strain ATCC 18683 / 1980 / Ss-1)</name>
    <name type="common">White mold</name>
    <name type="synonym">Whetzelinia sclerotiorum</name>
    <dbReference type="NCBI Taxonomy" id="665079"/>
    <lineage>
        <taxon>Eukaryota</taxon>
        <taxon>Fungi</taxon>
        <taxon>Dikarya</taxon>
        <taxon>Ascomycota</taxon>
        <taxon>Pezizomycotina</taxon>
        <taxon>Leotiomycetes</taxon>
        <taxon>Helotiales</taxon>
        <taxon>Sclerotiniaceae</taxon>
        <taxon>Sclerotinia</taxon>
    </lineage>
</organism>
<reference key="1">
    <citation type="journal article" date="2011" name="PLoS Genet.">
        <title>Genomic analysis of the necrotrophic fungal pathogens Sclerotinia sclerotiorum and Botrytis cinerea.</title>
        <authorList>
            <person name="Amselem J."/>
            <person name="Cuomo C.A."/>
            <person name="van Kan J.A.L."/>
            <person name="Viaud M."/>
            <person name="Benito E.P."/>
            <person name="Couloux A."/>
            <person name="Coutinho P.M."/>
            <person name="de Vries R.P."/>
            <person name="Dyer P.S."/>
            <person name="Fillinger S."/>
            <person name="Fournier E."/>
            <person name="Gout L."/>
            <person name="Hahn M."/>
            <person name="Kohn L."/>
            <person name="Lapalu N."/>
            <person name="Plummer K.M."/>
            <person name="Pradier J.-M."/>
            <person name="Quevillon E."/>
            <person name="Sharon A."/>
            <person name="Simon A."/>
            <person name="ten Have A."/>
            <person name="Tudzynski B."/>
            <person name="Tudzynski P."/>
            <person name="Wincker P."/>
            <person name="Andrew M."/>
            <person name="Anthouard V."/>
            <person name="Beever R.E."/>
            <person name="Beffa R."/>
            <person name="Benoit I."/>
            <person name="Bouzid O."/>
            <person name="Brault B."/>
            <person name="Chen Z."/>
            <person name="Choquer M."/>
            <person name="Collemare J."/>
            <person name="Cotton P."/>
            <person name="Danchin E.G."/>
            <person name="Da Silva C."/>
            <person name="Gautier A."/>
            <person name="Giraud C."/>
            <person name="Giraud T."/>
            <person name="Gonzalez C."/>
            <person name="Grossetete S."/>
            <person name="Gueldener U."/>
            <person name="Henrissat B."/>
            <person name="Howlett B.J."/>
            <person name="Kodira C."/>
            <person name="Kretschmer M."/>
            <person name="Lappartient A."/>
            <person name="Leroch M."/>
            <person name="Levis C."/>
            <person name="Mauceli E."/>
            <person name="Neuveglise C."/>
            <person name="Oeser B."/>
            <person name="Pearson M."/>
            <person name="Poulain J."/>
            <person name="Poussereau N."/>
            <person name="Quesneville H."/>
            <person name="Rascle C."/>
            <person name="Schumacher J."/>
            <person name="Segurens B."/>
            <person name="Sexton A."/>
            <person name="Silva E."/>
            <person name="Sirven C."/>
            <person name="Soanes D.M."/>
            <person name="Talbot N.J."/>
            <person name="Templeton M."/>
            <person name="Yandava C."/>
            <person name="Yarden O."/>
            <person name="Zeng Q."/>
            <person name="Rollins J.A."/>
            <person name="Lebrun M.-H."/>
            <person name="Dickman M."/>
        </authorList>
    </citation>
    <scope>NUCLEOTIDE SEQUENCE [LARGE SCALE GENOMIC DNA]</scope>
    <source>
        <strain>ATCC 18683 / 1980 / Ss-1</strain>
    </source>
</reference>
<comment type="function">
    <text evidence="1">Catalyzes the dehydration of methylthioribulose-1-phosphate (MTRu-1-P) into 2,3-diketo-5-methylthiopentyl-1-phosphate (DK-MTP-1-P).</text>
</comment>
<comment type="catalytic activity">
    <reaction evidence="1">
        <text>5-(methylsulfanyl)-D-ribulose 1-phosphate = 5-methylsulfanyl-2,3-dioxopentyl phosphate + H2O</text>
        <dbReference type="Rhea" id="RHEA:15549"/>
        <dbReference type="ChEBI" id="CHEBI:15377"/>
        <dbReference type="ChEBI" id="CHEBI:58548"/>
        <dbReference type="ChEBI" id="CHEBI:58828"/>
        <dbReference type="EC" id="4.2.1.109"/>
    </reaction>
</comment>
<comment type="cofactor">
    <cofactor evidence="1">
        <name>Zn(2+)</name>
        <dbReference type="ChEBI" id="CHEBI:29105"/>
    </cofactor>
    <text evidence="1">Binds 1 zinc ion per subunit.</text>
</comment>
<comment type="pathway">
    <text evidence="1">Amino-acid biosynthesis; L-methionine biosynthesis via salvage pathway; L-methionine from S-methyl-5-thio-alpha-D-ribose 1-phosphate: step 2/6.</text>
</comment>
<comment type="subcellular location">
    <subcellularLocation>
        <location evidence="1">Cytoplasm</location>
    </subcellularLocation>
</comment>
<comment type="similarity">
    <text evidence="1">Belongs to the aldolase class II family. MtnB subfamily.</text>
</comment>
<gene>
    <name evidence="1" type="primary">mde1</name>
    <name type="ORF">SS1G_04684</name>
</gene>
<sequence>MATQNPIQEVQESENSDHLIISQDPQHPANLIPELCSKFWHLGWVTGTGGGASIRNDNLVYLAPSGVQKELMKPEHIYVLDITAQVNPKQRIYLRSPPNLKPSQCTPLFMAAFTKRNAGCCIHTHSQWAVLITLLLESAPNTTMFEINNIEQIKAFGKGYTKTGNLGYHDTLRIPVIENTPHEEDLTEYLEEAMEKYPDTYAVLVRRHGVYVWGESVHKAKTQCESLDYLFQIAVEMKKLGLPWLSNVKPIA</sequence>
<name>MTNB_SCLS1</name>